<reference key="1">
    <citation type="journal article" date="1996" name="Gene">
        <title>A Mycobacterium tuberculosis gene cluster encoding proteins of a phosphate transporter homologous to the Escherichia coli Pst system.</title>
        <authorList>
            <person name="Braibant M."/>
            <person name="Lefevre P."/>
            <person name="de Wit L."/>
            <person name="Peirs P."/>
            <person name="Ooms J."/>
            <person name="Huygen K."/>
            <person name="Andersen A.B."/>
            <person name="Content J."/>
        </authorList>
    </citation>
    <scope>NUCLEOTIDE SEQUENCE [GENOMIC DNA]</scope>
    <source>
        <strain>ATCC 35801 / TMC 107 / Erdman</strain>
    </source>
</reference>
<reference key="2">
    <citation type="journal article" date="1998" name="Nature">
        <title>Deciphering the biology of Mycobacterium tuberculosis from the complete genome sequence.</title>
        <authorList>
            <person name="Cole S.T."/>
            <person name="Brosch R."/>
            <person name="Parkhill J."/>
            <person name="Garnier T."/>
            <person name="Churcher C.M."/>
            <person name="Harris D.E."/>
            <person name="Gordon S.V."/>
            <person name="Eiglmeier K."/>
            <person name="Gas S."/>
            <person name="Barry C.E. III"/>
            <person name="Tekaia F."/>
            <person name="Badcock K."/>
            <person name="Basham D."/>
            <person name="Brown D."/>
            <person name="Chillingworth T."/>
            <person name="Connor R."/>
            <person name="Davies R.M."/>
            <person name="Devlin K."/>
            <person name="Feltwell T."/>
            <person name="Gentles S."/>
            <person name="Hamlin N."/>
            <person name="Holroyd S."/>
            <person name="Hornsby T."/>
            <person name="Jagels K."/>
            <person name="Krogh A."/>
            <person name="McLean J."/>
            <person name="Moule S."/>
            <person name="Murphy L.D."/>
            <person name="Oliver S."/>
            <person name="Osborne J."/>
            <person name="Quail M.A."/>
            <person name="Rajandream M.A."/>
            <person name="Rogers J."/>
            <person name="Rutter S."/>
            <person name="Seeger K."/>
            <person name="Skelton S."/>
            <person name="Squares S."/>
            <person name="Squares R."/>
            <person name="Sulston J.E."/>
            <person name="Taylor K."/>
            <person name="Whitehead S."/>
            <person name="Barrell B.G."/>
        </authorList>
    </citation>
    <scope>NUCLEOTIDE SEQUENCE [LARGE SCALE GENOMIC DNA]</scope>
    <source>
        <strain>ATCC 25618 / H37Rv</strain>
    </source>
</reference>
<reference key="3">
    <citation type="journal article" date="2010" name="Tuberculosis">
        <title>Effect of PstS sub-units or PknD deficiency on the survival of Mycobacterium tuberculosis.</title>
        <authorList>
            <person name="Vanzembergh F."/>
            <person name="Peirs P."/>
            <person name="Lefevre P."/>
            <person name="Celio N."/>
            <person name="Mathys V."/>
            <person name="Content J."/>
            <person name="Kalai M."/>
        </authorList>
    </citation>
    <scope>FUNCTION</scope>
    <scope>INDUCTION</scope>
    <source>
        <strain>H37Rv</strain>
    </source>
</reference>
<reference key="4">
    <citation type="journal article" date="2011" name="Mol. Cell. Proteomics">
        <title>Proteogenomic analysis of Mycobacterium tuberculosis by high resolution mass spectrometry.</title>
        <authorList>
            <person name="Kelkar D.S."/>
            <person name="Kumar D."/>
            <person name="Kumar P."/>
            <person name="Balakrishnan L."/>
            <person name="Muthusamy B."/>
            <person name="Yadav A.K."/>
            <person name="Shrivastava P."/>
            <person name="Marimuthu A."/>
            <person name="Anand S."/>
            <person name="Sundaram H."/>
            <person name="Kingsbury R."/>
            <person name="Harsha H.C."/>
            <person name="Nair B."/>
            <person name="Prasad T.S."/>
            <person name="Chauhan D.S."/>
            <person name="Katoch K."/>
            <person name="Katoch V.M."/>
            <person name="Kumar P."/>
            <person name="Chaerkady R."/>
            <person name="Ramachandran S."/>
            <person name="Dash D."/>
            <person name="Pandey A."/>
        </authorList>
    </citation>
    <scope>IDENTIFICATION BY MASS SPECTROMETRY [LARGE SCALE ANALYSIS]</scope>
    <source>
        <strain>ATCC 25618 / H37Rv</strain>
    </source>
</reference>
<organism>
    <name type="scientific">Mycobacterium tuberculosis (strain ATCC 25618 / H37Rv)</name>
    <dbReference type="NCBI Taxonomy" id="83332"/>
    <lineage>
        <taxon>Bacteria</taxon>
        <taxon>Bacillati</taxon>
        <taxon>Actinomycetota</taxon>
        <taxon>Actinomycetes</taxon>
        <taxon>Mycobacteriales</taxon>
        <taxon>Mycobacteriaceae</taxon>
        <taxon>Mycobacterium</taxon>
        <taxon>Mycobacterium tuberculosis complex</taxon>
    </lineage>
</organism>
<name>PSTB2_MYCTU</name>
<sequence>MACERLGGQSGAADVDAAAPAMAAVNLTLGFAGKTVLDQVSMGFPARAVTSLMGPTGSGKTTFLRTLNRMNDKVSGYRYSGDVLLGGRSIFNYRDVLEFRRRVGMLFQRPNPFPMSIMDNVLAGVRAHKLVPRKEFRGVAQARLTEVGLWDAVKDRLSDSPFRLSGGQQQLLCLARTLAVNPEVLLLDEPTSALDPTTTEKIEEFIRSLADRLTVIIVTHNLAQAARISDRAALFFDGRLVEEGPTEQLFSSPKHAETARYVAGLSGDVKDAKRGN</sequence>
<evidence type="ECO:0000255" key="1">
    <source>
        <dbReference type="HAMAP-Rule" id="MF_01702"/>
    </source>
</evidence>
<evidence type="ECO:0000269" key="2">
    <source>
    </source>
</evidence>
<evidence type="ECO:0000305" key="3"/>
<evidence type="ECO:0000305" key="4">
    <source>
    </source>
</evidence>
<gene>
    <name evidence="1" type="primary">pstB2</name>
    <name type="synonym">pstB</name>
    <name type="ordered locus">Rv0933</name>
    <name type="ORF">MTCY08D9.06c</name>
</gene>
<feature type="chain" id="PRO_0000092850" description="Phosphate import ATP-binding protein PstB 2">
    <location>
        <begin position="1"/>
        <end position="276"/>
    </location>
</feature>
<feature type="domain" description="ABC transporter" evidence="1">
    <location>
        <begin position="22"/>
        <end position="262"/>
    </location>
</feature>
<feature type="binding site" evidence="1">
    <location>
        <begin position="54"/>
        <end position="61"/>
    </location>
    <ligand>
        <name>ATP</name>
        <dbReference type="ChEBI" id="CHEBI:30616"/>
    </ligand>
</feature>
<feature type="sequence conflict" description="In Ref. 1; CAA88024." evidence="3" ref="1">
    <original>GVRAHKLVPRKEF</original>
    <variation>ACVPTNWCRARNS</variation>
    <location>
        <begin position="124"/>
        <end position="136"/>
    </location>
</feature>
<comment type="function">
    <text evidence="1 4">Part of the ABC transporter complex PstSACB involved in phosphate import (Probable). Responsible for energy coupling to the transport system.</text>
</comment>
<comment type="catalytic activity">
    <reaction evidence="1">
        <text>phosphate(out) + ATP + H2O = ADP + 2 phosphate(in) + H(+)</text>
        <dbReference type="Rhea" id="RHEA:24440"/>
        <dbReference type="ChEBI" id="CHEBI:15377"/>
        <dbReference type="ChEBI" id="CHEBI:15378"/>
        <dbReference type="ChEBI" id="CHEBI:30616"/>
        <dbReference type="ChEBI" id="CHEBI:43474"/>
        <dbReference type="ChEBI" id="CHEBI:456216"/>
        <dbReference type="EC" id="7.3.2.1"/>
    </reaction>
</comment>
<comment type="subunit">
    <text evidence="1">The complex is composed of two ATP-binding proteins (PstB), two transmembrane proteins (PstC and PstA) and a solute-binding protein (PstS).</text>
</comment>
<comment type="subcellular location">
    <subcellularLocation>
        <location evidence="1">Cell membrane</location>
        <topology evidence="1">Peripheral membrane protein</topology>
    </subcellularLocation>
</comment>
<comment type="induction">
    <text evidence="2">Slightly induced by phosphate starvation, part of the pstB3-pstS2-pstC1-pstA2 operon.</text>
</comment>
<comment type="similarity">
    <text evidence="1">Belongs to the ABC transporter superfamily. Phosphate importer (TC 3.A.1.7) family.</text>
</comment>
<proteinExistence type="evidence at protein level"/>
<protein>
    <recommendedName>
        <fullName evidence="1">Phosphate import ATP-binding protein PstB 2</fullName>
        <ecNumber evidence="1">7.3.2.1</ecNumber>
    </recommendedName>
    <alternativeName>
        <fullName evidence="1">ABC phosphate transporter 2</fullName>
    </alternativeName>
    <alternativeName>
        <fullName evidence="1">Phosphate-transporting ATPase 2</fullName>
    </alternativeName>
</protein>
<keyword id="KW-0067">ATP-binding</keyword>
<keyword id="KW-1003">Cell membrane</keyword>
<keyword id="KW-0472">Membrane</keyword>
<keyword id="KW-0547">Nucleotide-binding</keyword>
<keyword id="KW-0592">Phosphate transport</keyword>
<keyword id="KW-1185">Reference proteome</keyword>
<keyword id="KW-1278">Translocase</keyword>
<keyword id="KW-0813">Transport</keyword>
<accession>P9WQK9</accession>
<accession>L0T5C0</accession>
<accession>O05869</accession>
<accession>P95302</accession>
<dbReference type="EC" id="7.3.2.1" evidence="1"/>
<dbReference type="EMBL" id="Z47981">
    <property type="protein sequence ID" value="CAA88024.1"/>
    <property type="molecule type" value="Genomic_DNA"/>
</dbReference>
<dbReference type="EMBL" id="AL123456">
    <property type="protein sequence ID" value="CCP43681.1"/>
    <property type="molecule type" value="Genomic_DNA"/>
</dbReference>
<dbReference type="PIR" id="E70584">
    <property type="entry name" value="E70584"/>
</dbReference>
<dbReference type="RefSeq" id="NP_215448.1">
    <property type="nucleotide sequence ID" value="NC_000962.3"/>
</dbReference>
<dbReference type="RefSeq" id="WP_003898653.1">
    <property type="nucleotide sequence ID" value="NZ_NVQJ01000001.1"/>
</dbReference>
<dbReference type="SMR" id="P9WQK9"/>
<dbReference type="FunCoup" id="P9WQK9">
    <property type="interactions" value="93"/>
</dbReference>
<dbReference type="STRING" id="83332.Rv0933"/>
<dbReference type="PaxDb" id="83332-Rv0933"/>
<dbReference type="DNASU" id="885653"/>
<dbReference type="GeneID" id="885653"/>
<dbReference type="KEGG" id="mtu:Rv0933"/>
<dbReference type="KEGG" id="mtv:RVBD_0933"/>
<dbReference type="TubercuList" id="Rv0933"/>
<dbReference type="eggNOG" id="COG1117">
    <property type="taxonomic scope" value="Bacteria"/>
</dbReference>
<dbReference type="InParanoid" id="P9WQK9"/>
<dbReference type="OrthoDB" id="4283894at2"/>
<dbReference type="PhylomeDB" id="P9WQK9"/>
<dbReference type="Proteomes" id="UP000001584">
    <property type="component" value="Chromosome"/>
</dbReference>
<dbReference type="GO" id="GO:0005886">
    <property type="term" value="C:plasma membrane"/>
    <property type="evidence" value="ECO:0007005"/>
    <property type="project" value="MTBBASE"/>
</dbReference>
<dbReference type="GO" id="GO:0005524">
    <property type="term" value="F:ATP binding"/>
    <property type="evidence" value="ECO:0000314"/>
    <property type="project" value="MTBBASE"/>
</dbReference>
<dbReference type="GO" id="GO:0016887">
    <property type="term" value="F:ATP hydrolysis activity"/>
    <property type="evidence" value="ECO:0000314"/>
    <property type="project" value="MTBBASE"/>
</dbReference>
<dbReference type="GO" id="GO:0015415">
    <property type="term" value="F:ATPase-coupled phosphate ion transmembrane transporter activity"/>
    <property type="evidence" value="ECO:0007669"/>
    <property type="project" value="UniProtKB-EC"/>
</dbReference>
<dbReference type="GO" id="GO:0035435">
    <property type="term" value="P:phosphate ion transmembrane transport"/>
    <property type="evidence" value="ECO:0007669"/>
    <property type="project" value="InterPro"/>
</dbReference>
<dbReference type="CDD" id="cd03260">
    <property type="entry name" value="ABC_PstB_phosphate_transporter"/>
    <property type="match status" value="1"/>
</dbReference>
<dbReference type="Gene3D" id="3.40.50.300">
    <property type="entry name" value="P-loop containing nucleotide triphosphate hydrolases"/>
    <property type="match status" value="1"/>
</dbReference>
<dbReference type="InterPro" id="IPR003593">
    <property type="entry name" value="AAA+_ATPase"/>
</dbReference>
<dbReference type="InterPro" id="IPR003439">
    <property type="entry name" value="ABC_transporter-like_ATP-bd"/>
</dbReference>
<dbReference type="InterPro" id="IPR017871">
    <property type="entry name" value="ABC_transporter-like_CS"/>
</dbReference>
<dbReference type="InterPro" id="IPR027417">
    <property type="entry name" value="P-loop_NTPase"/>
</dbReference>
<dbReference type="InterPro" id="IPR005670">
    <property type="entry name" value="PstB-like"/>
</dbReference>
<dbReference type="NCBIfam" id="TIGR00972">
    <property type="entry name" value="3a0107s01c2"/>
    <property type="match status" value="1"/>
</dbReference>
<dbReference type="NCBIfam" id="NF010864">
    <property type="entry name" value="PRK14271.1"/>
    <property type="match status" value="1"/>
</dbReference>
<dbReference type="PANTHER" id="PTHR43423">
    <property type="entry name" value="ABC TRANSPORTER I FAMILY MEMBER 17"/>
    <property type="match status" value="1"/>
</dbReference>
<dbReference type="PANTHER" id="PTHR43423:SF1">
    <property type="entry name" value="ABC TRANSPORTER I FAMILY MEMBER 17"/>
    <property type="match status" value="1"/>
</dbReference>
<dbReference type="Pfam" id="PF00005">
    <property type="entry name" value="ABC_tran"/>
    <property type="match status" value="1"/>
</dbReference>
<dbReference type="SMART" id="SM00382">
    <property type="entry name" value="AAA"/>
    <property type="match status" value="1"/>
</dbReference>
<dbReference type="SUPFAM" id="SSF52540">
    <property type="entry name" value="P-loop containing nucleoside triphosphate hydrolases"/>
    <property type="match status" value="1"/>
</dbReference>
<dbReference type="PROSITE" id="PS00211">
    <property type="entry name" value="ABC_TRANSPORTER_1"/>
    <property type="match status" value="1"/>
</dbReference>
<dbReference type="PROSITE" id="PS50893">
    <property type="entry name" value="ABC_TRANSPORTER_2"/>
    <property type="match status" value="1"/>
</dbReference>
<dbReference type="PROSITE" id="PS51238">
    <property type="entry name" value="PSTB"/>
    <property type="match status" value="1"/>
</dbReference>